<protein>
    <recommendedName>
        <fullName evidence="1">Ribonuclease 3</fullName>
        <ecNumber evidence="1">3.1.26.3</ecNumber>
    </recommendedName>
    <alternativeName>
        <fullName evidence="1">Ribonuclease III</fullName>
        <shortName evidence="1">RNase III</shortName>
    </alternativeName>
</protein>
<proteinExistence type="inferred from homology"/>
<accession>Q027L3</accession>
<organism>
    <name type="scientific">Solibacter usitatus (strain Ellin6076)</name>
    <dbReference type="NCBI Taxonomy" id="234267"/>
    <lineage>
        <taxon>Bacteria</taxon>
        <taxon>Pseudomonadati</taxon>
        <taxon>Acidobacteriota</taxon>
        <taxon>Terriglobia</taxon>
        <taxon>Bryobacterales</taxon>
        <taxon>Solibacteraceae</taxon>
        <taxon>Candidatus Solibacter</taxon>
    </lineage>
</organism>
<feature type="chain" id="PRO_1000094134" description="Ribonuclease 3">
    <location>
        <begin position="1"/>
        <end position="271"/>
    </location>
</feature>
<feature type="domain" description="RNase III" evidence="1">
    <location>
        <begin position="5"/>
        <end position="139"/>
    </location>
</feature>
<feature type="domain" description="DRBM" evidence="1">
    <location>
        <begin position="172"/>
        <end position="241"/>
    </location>
</feature>
<feature type="region of interest" description="Disordered" evidence="2">
    <location>
        <begin position="241"/>
        <end position="271"/>
    </location>
</feature>
<feature type="compositionally biased region" description="Acidic residues" evidence="2">
    <location>
        <begin position="251"/>
        <end position="261"/>
    </location>
</feature>
<feature type="active site" evidence="1">
    <location>
        <position position="56"/>
    </location>
</feature>
<feature type="active site" evidence="1">
    <location>
        <position position="128"/>
    </location>
</feature>
<feature type="binding site" evidence="1">
    <location>
        <position position="52"/>
    </location>
    <ligand>
        <name>Mg(2+)</name>
        <dbReference type="ChEBI" id="CHEBI:18420"/>
    </ligand>
</feature>
<feature type="binding site" evidence="1">
    <location>
        <position position="125"/>
    </location>
    <ligand>
        <name>Mg(2+)</name>
        <dbReference type="ChEBI" id="CHEBI:18420"/>
    </ligand>
</feature>
<feature type="binding site" evidence="1">
    <location>
        <position position="128"/>
    </location>
    <ligand>
        <name>Mg(2+)</name>
        <dbReference type="ChEBI" id="CHEBI:18420"/>
    </ligand>
</feature>
<evidence type="ECO:0000255" key="1">
    <source>
        <dbReference type="HAMAP-Rule" id="MF_00104"/>
    </source>
</evidence>
<evidence type="ECO:0000256" key="2">
    <source>
        <dbReference type="SAM" id="MobiDB-lite"/>
    </source>
</evidence>
<dbReference type="EC" id="3.1.26.3" evidence="1"/>
<dbReference type="EMBL" id="CP000473">
    <property type="protein sequence ID" value="ABJ82794.1"/>
    <property type="molecule type" value="Genomic_DNA"/>
</dbReference>
<dbReference type="SMR" id="Q027L3"/>
<dbReference type="FunCoup" id="Q027L3">
    <property type="interactions" value="478"/>
</dbReference>
<dbReference type="STRING" id="234267.Acid_1804"/>
<dbReference type="KEGG" id="sus:Acid_1804"/>
<dbReference type="eggNOG" id="COG0571">
    <property type="taxonomic scope" value="Bacteria"/>
</dbReference>
<dbReference type="HOGENOM" id="CLU_000907_1_3_0"/>
<dbReference type="InParanoid" id="Q027L3"/>
<dbReference type="OrthoDB" id="9805026at2"/>
<dbReference type="GO" id="GO:0005737">
    <property type="term" value="C:cytoplasm"/>
    <property type="evidence" value="ECO:0007669"/>
    <property type="project" value="UniProtKB-SubCell"/>
</dbReference>
<dbReference type="GO" id="GO:0003725">
    <property type="term" value="F:double-stranded RNA binding"/>
    <property type="evidence" value="ECO:0007669"/>
    <property type="project" value="TreeGrafter"/>
</dbReference>
<dbReference type="GO" id="GO:0046872">
    <property type="term" value="F:metal ion binding"/>
    <property type="evidence" value="ECO:0007669"/>
    <property type="project" value="UniProtKB-KW"/>
</dbReference>
<dbReference type="GO" id="GO:0004525">
    <property type="term" value="F:ribonuclease III activity"/>
    <property type="evidence" value="ECO:0007669"/>
    <property type="project" value="UniProtKB-UniRule"/>
</dbReference>
<dbReference type="GO" id="GO:0019843">
    <property type="term" value="F:rRNA binding"/>
    <property type="evidence" value="ECO:0007669"/>
    <property type="project" value="UniProtKB-KW"/>
</dbReference>
<dbReference type="GO" id="GO:0006397">
    <property type="term" value="P:mRNA processing"/>
    <property type="evidence" value="ECO:0007669"/>
    <property type="project" value="UniProtKB-UniRule"/>
</dbReference>
<dbReference type="GO" id="GO:0010468">
    <property type="term" value="P:regulation of gene expression"/>
    <property type="evidence" value="ECO:0007669"/>
    <property type="project" value="TreeGrafter"/>
</dbReference>
<dbReference type="GO" id="GO:0006364">
    <property type="term" value="P:rRNA processing"/>
    <property type="evidence" value="ECO:0007669"/>
    <property type="project" value="UniProtKB-UniRule"/>
</dbReference>
<dbReference type="GO" id="GO:0008033">
    <property type="term" value="P:tRNA processing"/>
    <property type="evidence" value="ECO:0007669"/>
    <property type="project" value="UniProtKB-KW"/>
</dbReference>
<dbReference type="CDD" id="cd10845">
    <property type="entry name" value="DSRM_RNAse_III_family"/>
    <property type="match status" value="1"/>
</dbReference>
<dbReference type="CDD" id="cd00593">
    <property type="entry name" value="RIBOc"/>
    <property type="match status" value="1"/>
</dbReference>
<dbReference type="FunFam" id="1.10.1520.10:FF:000001">
    <property type="entry name" value="Ribonuclease 3"/>
    <property type="match status" value="1"/>
</dbReference>
<dbReference type="FunFam" id="3.30.160.20:FF:000003">
    <property type="entry name" value="Ribonuclease 3"/>
    <property type="match status" value="1"/>
</dbReference>
<dbReference type="Gene3D" id="3.30.160.20">
    <property type="match status" value="1"/>
</dbReference>
<dbReference type="Gene3D" id="1.10.1520.10">
    <property type="entry name" value="Ribonuclease III domain"/>
    <property type="match status" value="1"/>
</dbReference>
<dbReference type="HAMAP" id="MF_00104">
    <property type="entry name" value="RNase_III"/>
    <property type="match status" value="1"/>
</dbReference>
<dbReference type="InterPro" id="IPR014720">
    <property type="entry name" value="dsRBD_dom"/>
</dbReference>
<dbReference type="InterPro" id="IPR011907">
    <property type="entry name" value="RNase_III"/>
</dbReference>
<dbReference type="InterPro" id="IPR000999">
    <property type="entry name" value="RNase_III_dom"/>
</dbReference>
<dbReference type="InterPro" id="IPR036389">
    <property type="entry name" value="RNase_III_sf"/>
</dbReference>
<dbReference type="NCBIfam" id="TIGR02191">
    <property type="entry name" value="RNaseIII"/>
    <property type="match status" value="1"/>
</dbReference>
<dbReference type="PANTHER" id="PTHR11207:SF0">
    <property type="entry name" value="RIBONUCLEASE 3"/>
    <property type="match status" value="1"/>
</dbReference>
<dbReference type="PANTHER" id="PTHR11207">
    <property type="entry name" value="RIBONUCLEASE III"/>
    <property type="match status" value="1"/>
</dbReference>
<dbReference type="Pfam" id="PF00035">
    <property type="entry name" value="dsrm"/>
    <property type="match status" value="1"/>
</dbReference>
<dbReference type="Pfam" id="PF14622">
    <property type="entry name" value="Ribonucleas_3_3"/>
    <property type="match status" value="1"/>
</dbReference>
<dbReference type="SMART" id="SM00358">
    <property type="entry name" value="DSRM"/>
    <property type="match status" value="1"/>
</dbReference>
<dbReference type="SMART" id="SM00535">
    <property type="entry name" value="RIBOc"/>
    <property type="match status" value="1"/>
</dbReference>
<dbReference type="SUPFAM" id="SSF54768">
    <property type="entry name" value="dsRNA-binding domain-like"/>
    <property type="match status" value="1"/>
</dbReference>
<dbReference type="SUPFAM" id="SSF69065">
    <property type="entry name" value="RNase III domain-like"/>
    <property type="match status" value="1"/>
</dbReference>
<dbReference type="PROSITE" id="PS50137">
    <property type="entry name" value="DS_RBD"/>
    <property type="match status" value="1"/>
</dbReference>
<dbReference type="PROSITE" id="PS00517">
    <property type="entry name" value="RNASE_3_1"/>
    <property type="match status" value="1"/>
</dbReference>
<dbReference type="PROSITE" id="PS50142">
    <property type="entry name" value="RNASE_3_2"/>
    <property type="match status" value="1"/>
</dbReference>
<keyword id="KW-0963">Cytoplasm</keyword>
<keyword id="KW-0255">Endonuclease</keyword>
<keyword id="KW-0378">Hydrolase</keyword>
<keyword id="KW-0460">Magnesium</keyword>
<keyword id="KW-0479">Metal-binding</keyword>
<keyword id="KW-0507">mRNA processing</keyword>
<keyword id="KW-0540">Nuclease</keyword>
<keyword id="KW-0694">RNA-binding</keyword>
<keyword id="KW-0698">rRNA processing</keyword>
<keyword id="KW-0699">rRNA-binding</keyword>
<keyword id="KW-0819">tRNA processing</keyword>
<name>RNC_SOLUE</name>
<gene>
    <name evidence="1" type="primary">rnc</name>
    <name type="ordered locus">Acid_1804</name>
</gene>
<sequence>MRAEPALLELKLDYRFNDPELLRRALTHSSLANENRPGAGVGSPLNDNEQLEFLGDSVLGFLIAEALVRRFPEYHEGDLSRLKAHLVSAAHLHGVARRLDLGSYLELGRSEEMSGGRTKKTLLVDGLEAIMAAIYLDGGVDAARAFVATHVLDAPFFGDEEAGTDIQPAITNFKSALQELAQTRRLPQPRYSVVRERGPEHSKTFTVEVRVGKEWTAQAEGRTKKIAAQRAARGLYERLMGDPIVPLPDDSPGDSPDDSGDAAESGVISAT</sequence>
<comment type="function">
    <text evidence="1">Digests double-stranded RNA. Involved in the processing of primary rRNA transcript to yield the immediate precursors to the large and small rRNAs (23S and 16S). Processes some mRNAs, and tRNAs when they are encoded in the rRNA operon. Processes pre-crRNA and tracrRNA of type II CRISPR loci if present in the organism.</text>
</comment>
<comment type="catalytic activity">
    <reaction evidence="1">
        <text>Endonucleolytic cleavage to 5'-phosphomonoester.</text>
        <dbReference type="EC" id="3.1.26.3"/>
    </reaction>
</comment>
<comment type="cofactor">
    <cofactor evidence="1">
        <name>Mg(2+)</name>
        <dbReference type="ChEBI" id="CHEBI:18420"/>
    </cofactor>
</comment>
<comment type="subunit">
    <text evidence="1">Homodimer.</text>
</comment>
<comment type="subcellular location">
    <subcellularLocation>
        <location evidence="1">Cytoplasm</location>
    </subcellularLocation>
</comment>
<comment type="similarity">
    <text evidence="1">Belongs to the ribonuclease III family.</text>
</comment>
<reference key="1">
    <citation type="journal article" date="2009" name="Appl. Environ. Microbiol.">
        <title>Three genomes from the phylum Acidobacteria provide insight into the lifestyles of these microorganisms in soils.</title>
        <authorList>
            <person name="Ward N.L."/>
            <person name="Challacombe J.F."/>
            <person name="Janssen P.H."/>
            <person name="Henrissat B."/>
            <person name="Coutinho P.M."/>
            <person name="Wu M."/>
            <person name="Xie G."/>
            <person name="Haft D.H."/>
            <person name="Sait M."/>
            <person name="Badger J."/>
            <person name="Barabote R.D."/>
            <person name="Bradley B."/>
            <person name="Brettin T.S."/>
            <person name="Brinkac L.M."/>
            <person name="Bruce D."/>
            <person name="Creasy T."/>
            <person name="Daugherty S.C."/>
            <person name="Davidsen T.M."/>
            <person name="DeBoy R.T."/>
            <person name="Detter J.C."/>
            <person name="Dodson R.J."/>
            <person name="Durkin A.S."/>
            <person name="Ganapathy A."/>
            <person name="Gwinn-Giglio M."/>
            <person name="Han C.S."/>
            <person name="Khouri H."/>
            <person name="Kiss H."/>
            <person name="Kothari S.P."/>
            <person name="Madupu R."/>
            <person name="Nelson K.E."/>
            <person name="Nelson W.C."/>
            <person name="Paulsen I."/>
            <person name="Penn K."/>
            <person name="Ren Q."/>
            <person name="Rosovitz M.J."/>
            <person name="Selengut J.D."/>
            <person name="Shrivastava S."/>
            <person name="Sullivan S.A."/>
            <person name="Tapia R."/>
            <person name="Thompson L.S."/>
            <person name="Watkins K.L."/>
            <person name="Yang Q."/>
            <person name="Yu C."/>
            <person name="Zafar N."/>
            <person name="Zhou L."/>
            <person name="Kuske C.R."/>
        </authorList>
    </citation>
    <scope>NUCLEOTIDE SEQUENCE [LARGE SCALE GENOMIC DNA]</scope>
    <source>
        <strain>Ellin6076</strain>
    </source>
</reference>